<sequence length="104" mass="11655">MSQSNTLTVQILDKEYCINCPDDERANLESAARYLDGKMREIRSSGKVIGADRVAVMAALNITHDLLHRKERLDQESSSTRERVRELLDRVDRALANPADAGEA</sequence>
<accession>Q9HTW3</accession>
<proteinExistence type="evidence at protein level"/>
<organism>
    <name type="scientific">Pseudomonas aeruginosa (strain ATCC 15692 / DSM 22644 / CIP 104116 / JCM 14847 / LMG 12228 / 1C / PRS 101 / PAO1)</name>
    <dbReference type="NCBI Taxonomy" id="208964"/>
    <lineage>
        <taxon>Bacteria</taxon>
        <taxon>Pseudomonadati</taxon>
        <taxon>Pseudomonadota</taxon>
        <taxon>Gammaproteobacteria</taxon>
        <taxon>Pseudomonadales</taxon>
        <taxon>Pseudomonadaceae</taxon>
        <taxon>Pseudomonas</taxon>
    </lineage>
</organism>
<protein>
    <recommendedName>
        <fullName>Cell division protein ZapA</fullName>
    </recommendedName>
    <alternativeName>
        <fullName>Z ring-associated protein ZapA</fullName>
    </alternativeName>
</protein>
<feature type="chain" id="PRO_0000345652" description="Cell division protein ZapA">
    <location>
        <begin position="1"/>
        <end position="104"/>
    </location>
</feature>
<feature type="coiled-coil region" evidence="2">
    <location>
        <begin position="66"/>
        <end position="94"/>
    </location>
</feature>
<feature type="strand" evidence="4">
    <location>
        <begin position="7"/>
        <end position="11"/>
    </location>
</feature>
<feature type="strand" evidence="4">
    <location>
        <begin position="14"/>
        <end position="18"/>
    </location>
</feature>
<feature type="turn" evidence="4">
    <location>
        <begin position="22"/>
        <end position="24"/>
    </location>
</feature>
<feature type="helix" evidence="4">
    <location>
        <begin position="25"/>
        <end position="43"/>
    </location>
</feature>
<feature type="helix" evidence="4">
    <location>
        <begin position="51"/>
        <end position="96"/>
    </location>
</feature>
<comment type="function">
    <text evidence="1">Activator of cell division through the inhibition of FtsZ GTPase activity, therefore promoting FtsZ assembly into bundles of protofilaments necessary for the formation of the division Z ring. It is recruited early at mid-cell but it is not essential for cell division (By similarity).</text>
</comment>
<comment type="subunit">
    <text evidence="1">Homodimer. Interacts with FtsZ (By similarity).</text>
</comment>
<comment type="subcellular location">
    <subcellularLocation>
        <location evidence="1">Cytoplasm</location>
    </subcellularLocation>
    <text evidence="1">Localizes at mid-cell.</text>
</comment>
<comment type="similarity">
    <text evidence="3">Belongs to the ZapA family. Type 1 subfamily.</text>
</comment>
<name>ZAPA_PSEAE</name>
<dbReference type="EMBL" id="AE004091">
    <property type="protein sequence ID" value="AAG08612.1"/>
    <property type="molecule type" value="Genomic_DNA"/>
</dbReference>
<dbReference type="PIR" id="C82993">
    <property type="entry name" value="C82993"/>
</dbReference>
<dbReference type="RefSeq" id="NP_253914.1">
    <property type="nucleotide sequence ID" value="NC_002516.2"/>
</dbReference>
<dbReference type="RefSeq" id="WP_003096316.1">
    <property type="nucleotide sequence ID" value="NZ_QZGE01000002.1"/>
</dbReference>
<dbReference type="PDB" id="1T3U">
    <property type="method" value="X-ray"/>
    <property type="resolution" value="2.50 A"/>
    <property type="chains" value="A/B/C/D=1-104"/>
</dbReference>
<dbReference type="PDB" id="1W2E">
    <property type="method" value="X-ray"/>
    <property type="resolution" value="2.80 A"/>
    <property type="chains" value="A/B=1-104"/>
</dbReference>
<dbReference type="PDBsum" id="1T3U"/>
<dbReference type="PDBsum" id="1W2E"/>
<dbReference type="SMR" id="Q9HTW3"/>
<dbReference type="FunCoup" id="Q9HTW3">
    <property type="interactions" value="76"/>
</dbReference>
<dbReference type="STRING" id="208964.PA5227"/>
<dbReference type="PaxDb" id="208964-PA5227"/>
<dbReference type="DNASU" id="878641"/>
<dbReference type="GeneID" id="878641"/>
<dbReference type="KEGG" id="pae:PA5227"/>
<dbReference type="PATRIC" id="fig|208964.12.peg.5477"/>
<dbReference type="PseudoCAP" id="PA5227"/>
<dbReference type="HOGENOM" id="CLU_116623_2_1_6"/>
<dbReference type="InParanoid" id="Q9HTW3"/>
<dbReference type="OrthoDB" id="5772359at2"/>
<dbReference type="PhylomeDB" id="Q9HTW3"/>
<dbReference type="BioCyc" id="PAER208964:G1FZ6-5346-MONOMER"/>
<dbReference type="EvolutionaryTrace" id="Q9HTW3"/>
<dbReference type="Proteomes" id="UP000002438">
    <property type="component" value="Chromosome"/>
</dbReference>
<dbReference type="GO" id="GO:0032153">
    <property type="term" value="C:cell division site"/>
    <property type="evidence" value="ECO:0000318"/>
    <property type="project" value="GO_Central"/>
</dbReference>
<dbReference type="GO" id="GO:0030428">
    <property type="term" value="C:cell septum"/>
    <property type="evidence" value="ECO:0000318"/>
    <property type="project" value="GO_Central"/>
</dbReference>
<dbReference type="GO" id="GO:0005829">
    <property type="term" value="C:cytosol"/>
    <property type="evidence" value="ECO:0000318"/>
    <property type="project" value="GO_Central"/>
</dbReference>
<dbReference type="GO" id="GO:0000917">
    <property type="term" value="P:division septum assembly"/>
    <property type="evidence" value="ECO:0000318"/>
    <property type="project" value="GO_Central"/>
</dbReference>
<dbReference type="GO" id="GO:0043093">
    <property type="term" value="P:FtsZ-dependent cytokinesis"/>
    <property type="evidence" value="ECO:0000318"/>
    <property type="project" value="GO_Central"/>
</dbReference>
<dbReference type="GO" id="GO:0000921">
    <property type="term" value="P:septin ring assembly"/>
    <property type="evidence" value="ECO:0000318"/>
    <property type="project" value="GO_Central"/>
</dbReference>
<dbReference type="FunFam" id="3.30.160.880:FF:000002">
    <property type="entry name" value="Cell division protein ZapA"/>
    <property type="match status" value="1"/>
</dbReference>
<dbReference type="Gene3D" id="1.20.5.50">
    <property type="match status" value="1"/>
</dbReference>
<dbReference type="Gene3D" id="3.30.160.880">
    <property type="entry name" value="Cell division protein ZapA protomer, N-terminal domain"/>
    <property type="match status" value="1"/>
</dbReference>
<dbReference type="InterPro" id="IPR007838">
    <property type="entry name" value="Cell_div_ZapA-like"/>
</dbReference>
<dbReference type="InterPro" id="IPR036192">
    <property type="entry name" value="Cell_div_ZapA-like_sf"/>
</dbReference>
<dbReference type="InterPro" id="IPR042233">
    <property type="entry name" value="Cell_div_ZapA_N"/>
</dbReference>
<dbReference type="PANTHER" id="PTHR34981">
    <property type="entry name" value="CELL DIVISION PROTEIN ZAPA"/>
    <property type="match status" value="1"/>
</dbReference>
<dbReference type="PANTHER" id="PTHR34981:SF1">
    <property type="entry name" value="CELL DIVISION PROTEIN ZAPA"/>
    <property type="match status" value="1"/>
</dbReference>
<dbReference type="Pfam" id="PF05164">
    <property type="entry name" value="ZapA"/>
    <property type="match status" value="1"/>
</dbReference>
<dbReference type="SUPFAM" id="SSF102829">
    <property type="entry name" value="Cell division protein ZapA-like"/>
    <property type="match status" value="1"/>
</dbReference>
<gene>
    <name type="primary">zapA</name>
    <name type="ordered locus">PA5227</name>
</gene>
<evidence type="ECO:0000250" key="1"/>
<evidence type="ECO:0000255" key="2"/>
<evidence type="ECO:0000305" key="3"/>
<evidence type="ECO:0007829" key="4">
    <source>
        <dbReference type="PDB" id="1T3U"/>
    </source>
</evidence>
<reference key="1">
    <citation type="journal article" date="2000" name="Nature">
        <title>Complete genome sequence of Pseudomonas aeruginosa PAO1, an opportunistic pathogen.</title>
        <authorList>
            <person name="Stover C.K."/>
            <person name="Pham X.-Q.T."/>
            <person name="Erwin A.L."/>
            <person name="Mizoguchi S.D."/>
            <person name="Warrener P."/>
            <person name="Hickey M.J."/>
            <person name="Brinkman F.S.L."/>
            <person name="Hufnagle W.O."/>
            <person name="Kowalik D.J."/>
            <person name="Lagrou M."/>
            <person name="Garber R.L."/>
            <person name="Goltry L."/>
            <person name="Tolentino E."/>
            <person name="Westbrock-Wadman S."/>
            <person name="Yuan Y."/>
            <person name="Brody L.L."/>
            <person name="Coulter S.N."/>
            <person name="Folger K.R."/>
            <person name="Kas A."/>
            <person name="Larbig K."/>
            <person name="Lim R.M."/>
            <person name="Smith K.A."/>
            <person name="Spencer D.H."/>
            <person name="Wong G.K.-S."/>
            <person name="Wu Z."/>
            <person name="Paulsen I.T."/>
            <person name="Reizer J."/>
            <person name="Saier M.H. Jr."/>
            <person name="Hancock R.E.W."/>
            <person name="Lory S."/>
            <person name="Olson M.V."/>
        </authorList>
    </citation>
    <scope>NUCLEOTIDE SEQUENCE [LARGE SCALE GENOMIC DNA]</scope>
    <source>
        <strain>ATCC 15692 / DSM 22644 / CIP 104116 / JCM 14847 / LMG 12228 / 1C / PRS 101 / PAO1</strain>
    </source>
</reference>
<reference key="2">
    <citation type="journal article" date="2004" name="J. Mol. Biol.">
        <title>The crystal structure of ZapA and its modulation of FtsZ polymerisation.</title>
        <authorList>
            <person name="Low H.H."/>
            <person name="Moncrieffe M.C."/>
            <person name="Loewe J."/>
        </authorList>
    </citation>
    <scope>X-RAY CRYSTALLOGRAPHY (2.8 ANGSTROMS)</scope>
    <scope>SUBUNIT</scope>
</reference>
<reference key="3">
    <citation type="submission" date="2005-01" db="PDB data bank">
        <title>Structure of a conserved hypothetical protein Pseudomonas aeruginosa pa01.</title>
        <authorList>
            <consortium name="New York structural genomix research consortium (NYSGXRC)"/>
        </authorList>
    </citation>
    <scope>X-RAY CRYSTALLOGRAPHY (2.5 ANGSTROMS)</scope>
</reference>
<keyword id="KW-0002">3D-structure</keyword>
<keyword id="KW-0131">Cell cycle</keyword>
<keyword id="KW-0132">Cell division</keyword>
<keyword id="KW-0175">Coiled coil</keyword>
<keyword id="KW-0963">Cytoplasm</keyword>
<keyword id="KW-1185">Reference proteome</keyword>
<keyword id="KW-0717">Septation</keyword>